<proteinExistence type="evidence at protein level"/>
<protein>
    <recommendedName>
        <fullName evidence="2">Probable transcription factor At1g44810</fullName>
    </recommendedName>
    <alternativeName>
        <fullName evidence="2">Storekeeper-like protein At1g44810</fullName>
    </alternativeName>
</protein>
<name>STKLB_ARATH</name>
<dbReference type="EMBL" id="AC020576">
    <property type="protein sequence ID" value="AAF78264.1"/>
    <property type="molecule type" value="Genomic_DNA"/>
</dbReference>
<dbReference type="EMBL" id="CP002684">
    <property type="protein sequence ID" value="AEE32054.1"/>
    <property type="molecule type" value="Genomic_DNA"/>
</dbReference>
<dbReference type="EMBL" id="AY042861">
    <property type="protein sequence ID" value="AAK68801.1"/>
    <property type="molecule type" value="mRNA"/>
</dbReference>
<dbReference type="EMBL" id="AY072504">
    <property type="protein sequence ID" value="AAL66919.1"/>
    <property type="molecule type" value="mRNA"/>
</dbReference>
<dbReference type="PIR" id="B96507">
    <property type="entry name" value="B96507"/>
</dbReference>
<dbReference type="RefSeq" id="NP_564491.1">
    <property type="nucleotide sequence ID" value="NM_103562.3"/>
</dbReference>
<dbReference type="FunCoup" id="Q9LPF0">
    <property type="interactions" value="590"/>
</dbReference>
<dbReference type="IntAct" id="Q9LPF0">
    <property type="interactions" value="6"/>
</dbReference>
<dbReference type="STRING" id="3702.Q9LPF0"/>
<dbReference type="PaxDb" id="3702-AT1G44810.1"/>
<dbReference type="ProteomicsDB" id="228414"/>
<dbReference type="EnsemblPlants" id="AT1G44810.1">
    <property type="protein sequence ID" value="AT1G44810.1"/>
    <property type="gene ID" value="AT1G44810"/>
</dbReference>
<dbReference type="GeneID" id="841045"/>
<dbReference type="Gramene" id="AT1G44810.1">
    <property type="protein sequence ID" value="AT1G44810.1"/>
    <property type="gene ID" value="AT1G44810"/>
</dbReference>
<dbReference type="KEGG" id="ath:AT1G44810"/>
<dbReference type="Araport" id="AT1G44810"/>
<dbReference type="TAIR" id="AT1G44810">
    <property type="gene designation" value="GPL4"/>
</dbReference>
<dbReference type="eggNOG" id="ENOG502RQE9">
    <property type="taxonomic scope" value="Eukaryota"/>
</dbReference>
<dbReference type="HOGENOM" id="CLU_051273_0_0_1"/>
<dbReference type="InParanoid" id="Q9LPF0"/>
<dbReference type="OMA" id="SHGMALN"/>
<dbReference type="PhylomeDB" id="Q9LPF0"/>
<dbReference type="PRO" id="PR:Q9LPF0"/>
<dbReference type="Proteomes" id="UP000006548">
    <property type="component" value="Chromosome 1"/>
</dbReference>
<dbReference type="ExpressionAtlas" id="Q9LPF0">
    <property type="expression patterns" value="baseline and differential"/>
</dbReference>
<dbReference type="GO" id="GO:0000976">
    <property type="term" value="F:transcription cis-regulatory region binding"/>
    <property type="evidence" value="ECO:0000353"/>
    <property type="project" value="TAIR"/>
</dbReference>
<dbReference type="GO" id="GO:0045893">
    <property type="term" value="P:positive regulation of DNA-templated transcription"/>
    <property type="evidence" value="ECO:0000314"/>
    <property type="project" value="TAIR"/>
</dbReference>
<dbReference type="GO" id="GO:0006355">
    <property type="term" value="P:regulation of DNA-templated transcription"/>
    <property type="evidence" value="ECO:0000304"/>
    <property type="project" value="TAIR"/>
</dbReference>
<dbReference type="GO" id="GO:0046686">
    <property type="term" value="P:response to cadmium ion"/>
    <property type="evidence" value="ECO:0000315"/>
    <property type="project" value="TAIR"/>
</dbReference>
<dbReference type="InterPro" id="IPR007592">
    <property type="entry name" value="GEBP"/>
</dbReference>
<dbReference type="InterPro" id="IPR053933">
    <property type="entry name" value="GeBP-like_C"/>
</dbReference>
<dbReference type="InterPro" id="IPR053932">
    <property type="entry name" value="GeBP-like_DBD"/>
</dbReference>
<dbReference type="PANTHER" id="PTHR31662">
    <property type="entry name" value="BNAANNG10740D PROTEIN-RELATED"/>
    <property type="match status" value="1"/>
</dbReference>
<dbReference type="PANTHER" id="PTHR31662:SF68">
    <property type="entry name" value="DNA-BINDING STOREKEEPER PROTEIN TRANSCRIPTIONAL REGULATOR-LIKE PROTEIN-RELATED"/>
    <property type="match status" value="1"/>
</dbReference>
<dbReference type="Pfam" id="PF22757">
    <property type="entry name" value="GeBP-like_C"/>
    <property type="match status" value="1"/>
</dbReference>
<dbReference type="Pfam" id="PF04504">
    <property type="entry name" value="GeBP-like_DBD"/>
    <property type="match status" value="1"/>
</dbReference>
<organism>
    <name type="scientific">Arabidopsis thaliana</name>
    <name type="common">Mouse-ear cress</name>
    <dbReference type="NCBI Taxonomy" id="3702"/>
    <lineage>
        <taxon>Eukaryota</taxon>
        <taxon>Viridiplantae</taxon>
        <taxon>Streptophyta</taxon>
        <taxon>Embryophyta</taxon>
        <taxon>Tracheophyta</taxon>
        <taxon>Spermatophyta</taxon>
        <taxon>Magnoliopsida</taxon>
        <taxon>eudicotyledons</taxon>
        <taxon>Gunneridae</taxon>
        <taxon>Pentapetalae</taxon>
        <taxon>rosids</taxon>
        <taxon>malvids</taxon>
        <taxon>Brassicales</taxon>
        <taxon>Brassicaceae</taxon>
        <taxon>Camelineae</taxon>
        <taxon>Arabidopsis</taxon>
    </lineage>
</organism>
<sequence length="296" mass="32953">MNKKLLNPLEDPPTASSSEDVDEEISSGEDEKEHISNSSSSEEENELKDLSTQTLNSPSTEAPTLDSGSETNSDSDKPIVLTSQKKKEGTDSSGTKRASEGTSSKDIKRAKKVSGDDDNKKFQSLWTKEDEISLLQGMIDFKAETGTSAHDDMNGFFDIAKRYISFDVSKIQFGDKIRGLKKKYFGVRKKKGLDLDHDKKCLGLAKSIWGLDGKEVVVLGGDSETSNWFEKSFLVRVVARLGVDECIVKWKWSKVSKETKKRIEEKMKMVEAKELELLSQKIDVLKEVASVIAETI</sequence>
<comment type="interaction">
    <interactant intactId="EBI-15194473">
        <id>Q9LPF0</id>
    </interactant>
    <interactant intactId="EBI-4424255">
        <id>Q8LG05</id>
        <label>STKL1</label>
    </interactant>
    <organismsDiffer>false</organismsDiffer>
    <experiments>3</experiments>
</comment>
<comment type="similarity">
    <text evidence="2">Belongs to the GeBP family.</text>
</comment>
<comment type="online information" name="Plant Transcription Factor Database">
    <link uri="https://planttfdb.gao-lab.org/family.php?fam=GeBP#family_intro"/>
</comment>
<accession>Q9LPF0</accession>
<evidence type="ECO:0000256" key="1">
    <source>
        <dbReference type="SAM" id="MobiDB-lite"/>
    </source>
</evidence>
<evidence type="ECO:0000305" key="2"/>
<evidence type="ECO:0000312" key="3">
    <source>
        <dbReference type="Araport" id="AT1G44810"/>
    </source>
</evidence>
<evidence type="ECO:0000312" key="4">
    <source>
        <dbReference type="EMBL" id="AAL66919.1"/>
    </source>
</evidence>
<reference key="1">
    <citation type="journal article" date="2000" name="Nature">
        <title>Sequence and analysis of chromosome 1 of the plant Arabidopsis thaliana.</title>
        <authorList>
            <person name="Theologis A."/>
            <person name="Ecker J.R."/>
            <person name="Palm C.J."/>
            <person name="Federspiel N.A."/>
            <person name="Kaul S."/>
            <person name="White O."/>
            <person name="Alonso J."/>
            <person name="Altafi H."/>
            <person name="Araujo R."/>
            <person name="Bowman C.L."/>
            <person name="Brooks S.Y."/>
            <person name="Buehler E."/>
            <person name="Chan A."/>
            <person name="Chao Q."/>
            <person name="Chen H."/>
            <person name="Cheuk R.F."/>
            <person name="Chin C.W."/>
            <person name="Chung M.K."/>
            <person name="Conn L."/>
            <person name="Conway A.B."/>
            <person name="Conway A.R."/>
            <person name="Creasy T.H."/>
            <person name="Dewar K."/>
            <person name="Dunn P."/>
            <person name="Etgu P."/>
            <person name="Feldblyum T.V."/>
            <person name="Feng J.-D."/>
            <person name="Fong B."/>
            <person name="Fujii C.Y."/>
            <person name="Gill J.E."/>
            <person name="Goldsmith A.D."/>
            <person name="Haas B."/>
            <person name="Hansen N.F."/>
            <person name="Hughes B."/>
            <person name="Huizar L."/>
            <person name="Hunter J.L."/>
            <person name="Jenkins J."/>
            <person name="Johnson-Hopson C."/>
            <person name="Khan S."/>
            <person name="Khaykin E."/>
            <person name="Kim C.J."/>
            <person name="Koo H.L."/>
            <person name="Kremenetskaia I."/>
            <person name="Kurtz D.B."/>
            <person name="Kwan A."/>
            <person name="Lam B."/>
            <person name="Langin-Hooper S."/>
            <person name="Lee A."/>
            <person name="Lee J.M."/>
            <person name="Lenz C.A."/>
            <person name="Li J.H."/>
            <person name="Li Y.-P."/>
            <person name="Lin X."/>
            <person name="Liu S.X."/>
            <person name="Liu Z.A."/>
            <person name="Luros J.S."/>
            <person name="Maiti R."/>
            <person name="Marziali A."/>
            <person name="Militscher J."/>
            <person name="Miranda M."/>
            <person name="Nguyen M."/>
            <person name="Nierman W.C."/>
            <person name="Osborne B.I."/>
            <person name="Pai G."/>
            <person name="Peterson J."/>
            <person name="Pham P.K."/>
            <person name="Rizzo M."/>
            <person name="Rooney T."/>
            <person name="Rowley D."/>
            <person name="Sakano H."/>
            <person name="Salzberg S.L."/>
            <person name="Schwartz J.R."/>
            <person name="Shinn P."/>
            <person name="Southwick A.M."/>
            <person name="Sun H."/>
            <person name="Tallon L.J."/>
            <person name="Tambunga G."/>
            <person name="Toriumi M.J."/>
            <person name="Town C.D."/>
            <person name="Utterback T."/>
            <person name="Van Aken S."/>
            <person name="Vaysberg M."/>
            <person name="Vysotskaia V.S."/>
            <person name="Walker M."/>
            <person name="Wu D."/>
            <person name="Yu G."/>
            <person name="Fraser C.M."/>
            <person name="Venter J.C."/>
            <person name="Davis R.W."/>
        </authorList>
    </citation>
    <scope>NUCLEOTIDE SEQUENCE [LARGE SCALE GENOMIC DNA]</scope>
    <source>
        <strain>cv. Columbia</strain>
    </source>
</reference>
<reference key="2">
    <citation type="journal article" date="2017" name="Plant J.">
        <title>Araport11: a complete reannotation of the Arabidopsis thaliana reference genome.</title>
        <authorList>
            <person name="Cheng C.Y."/>
            <person name="Krishnakumar V."/>
            <person name="Chan A.P."/>
            <person name="Thibaud-Nissen F."/>
            <person name="Schobel S."/>
            <person name="Town C.D."/>
        </authorList>
    </citation>
    <scope>GENOME REANNOTATION</scope>
    <source>
        <strain>cv. Columbia</strain>
    </source>
</reference>
<reference key="3">
    <citation type="journal article" date="2003" name="Science">
        <title>Empirical analysis of transcriptional activity in the Arabidopsis genome.</title>
        <authorList>
            <person name="Yamada K."/>
            <person name="Lim J."/>
            <person name="Dale J.M."/>
            <person name="Chen H."/>
            <person name="Shinn P."/>
            <person name="Palm C.J."/>
            <person name="Southwick A.M."/>
            <person name="Wu H.C."/>
            <person name="Kim C.J."/>
            <person name="Nguyen M."/>
            <person name="Pham P.K."/>
            <person name="Cheuk R.F."/>
            <person name="Karlin-Newmann G."/>
            <person name="Liu S.X."/>
            <person name="Lam B."/>
            <person name="Sakano H."/>
            <person name="Wu T."/>
            <person name="Yu G."/>
            <person name="Miranda M."/>
            <person name="Quach H.L."/>
            <person name="Tripp M."/>
            <person name="Chang C.H."/>
            <person name="Lee J.M."/>
            <person name="Toriumi M.J."/>
            <person name="Chan M.M."/>
            <person name="Tang C.C."/>
            <person name="Onodera C.S."/>
            <person name="Deng J.M."/>
            <person name="Akiyama K."/>
            <person name="Ansari Y."/>
            <person name="Arakawa T."/>
            <person name="Banh J."/>
            <person name="Banno F."/>
            <person name="Bowser L."/>
            <person name="Brooks S.Y."/>
            <person name="Carninci P."/>
            <person name="Chao Q."/>
            <person name="Choy N."/>
            <person name="Enju A."/>
            <person name="Goldsmith A.D."/>
            <person name="Gurjal M."/>
            <person name="Hansen N.F."/>
            <person name="Hayashizaki Y."/>
            <person name="Johnson-Hopson C."/>
            <person name="Hsuan V.W."/>
            <person name="Iida K."/>
            <person name="Karnes M."/>
            <person name="Khan S."/>
            <person name="Koesema E."/>
            <person name="Ishida J."/>
            <person name="Jiang P.X."/>
            <person name="Jones T."/>
            <person name="Kawai J."/>
            <person name="Kamiya A."/>
            <person name="Meyers C."/>
            <person name="Nakajima M."/>
            <person name="Narusaka M."/>
            <person name="Seki M."/>
            <person name="Sakurai T."/>
            <person name="Satou M."/>
            <person name="Tamse R."/>
            <person name="Vaysberg M."/>
            <person name="Wallender E.K."/>
            <person name="Wong C."/>
            <person name="Yamamura Y."/>
            <person name="Yuan S."/>
            <person name="Shinozaki K."/>
            <person name="Davis R.W."/>
            <person name="Theologis A."/>
            <person name="Ecker J.R."/>
        </authorList>
    </citation>
    <scope>NUCLEOTIDE SEQUENCE [LARGE SCALE MRNA]</scope>
    <source>
        <strain>cv. Columbia</strain>
    </source>
</reference>
<reference key="4">
    <citation type="journal article" date="2003" name="Plant J.">
        <title>GeBP, the first member of a new gene family in Arabidopsis, encodes a nuclear protein with DNA-binding activity and is regulated by KNAT1.</title>
        <authorList>
            <person name="Curaba J."/>
            <person name="Herzog M."/>
            <person name="Vachon G."/>
        </authorList>
    </citation>
    <scope>GENE FAMILY</scope>
</reference>
<reference key="5">
    <citation type="journal article" date="2016" name="Plant Physiol. Biochem.">
        <title>Regulation of Arabidopsis thaliana plasma membrane glucose-responsive regulator (AtPGR) expression by A. thaliana storekeeper-like transcription factor, AtSTKL, modulates glucose response in Arabidopsis.</title>
        <authorList>
            <person name="Chung M.S."/>
            <person name="Lee S."/>
            <person name="Min J.H."/>
            <person name="Huang P."/>
            <person name="Ju H.W."/>
            <person name="Kim C.S."/>
        </authorList>
    </citation>
    <scope>GENE FAMILY</scope>
</reference>
<keyword id="KW-1185">Reference proteome</keyword>
<keyword id="KW-0804">Transcription</keyword>
<keyword id="KW-0805">Transcription regulation</keyword>
<gene>
    <name evidence="3" type="ordered locus">At1g44810</name>
    <name evidence="4" type="ORF">T12C22.8</name>
</gene>
<feature type="chain" id="PRO_0000436976" description="Probable transcription factor At1g44810">
    <location>
        <begin position="1"/>
        <end position="296"/>
    </location>
</feature>
<feature type="region of interest" description="Disordered" evidence="1">
    <location>
        <begin position="1"/>
        <end position="119"/>
    </location>
</feature>
<feature type="compositionally biased region" description="Acidic residues" evidence="1">
    <location>
        <begin position="19"/>
        <end position="28"/>
    </location>
</feature>
<feature type="compositionally biased region" description="Polar residues" evidence="1">
    <location>
        <begin position="52"/>
        <end position="72"/>
    </location>
</feature>
<feature type="compositionally biased region" description="Basic and acidic residues" evidence="1">
    <location>
        <begin position="97"/>
        <end position="119"/>
    </location>
</feature>